<proteinExistence type="inferred from homology"/>
<comment type="subcellular location">
    <subcellularLocation>
        <location evidence="1">Cell membrane</location>
        <topology evidence="1">Multi-pass membrane protein</topology>
    </subcellularLocation>
</comment>
<comment type="similarity">
    <text evidence="1">Belongs to the UPF0756 family.</text>
</comment>
<evidence type="ECO:0000255" key="1">
    <source>
        <dbReference type="HAMAP-Rule" id="MF_01874"/>
    </source>
</evidence>
<reference key="1">
    <citation type="journal article" date="2008" name="Genome Res.">
        <title>Comparative genome analysis of Salmonella enteritidis PT4 and Salmonella gallinarum 287/91 provides insights into evolutionary and host adaptation pathways.</title>
        <authorList>
            <person name="Thomson N.R."/>
            <person name="Clayton D.J."/>
            <person name="Windhorst D."/>
            <person name="Vernikos G."/>
            <person name="Davidson S."/>
            <person name="Churcher C."/>
            <person name="Quail M.A."/>
            <person name="Stevens M."/>
            <person name="Jones M.A."/>
            <person name="Watson M."/>
            <person name="Barron A."/>
            <person name="Layton A."/>
            <person name="Pickard D."/>
            <person name="Kingsley R.A."/>
            <person name="Bignell A."/>
            <person name="Clark L."/>
            <person name="Harris B."/>
            <person name="Ormond D."/>
            <person name="Abdellah Z."/>
            <person name="Brooks K."/>
            <person name="Cherevach I."/>
            <person name="Chillingworth T."/>
            <person name="Woodward J."/>
            <person name="Norberczak H."/>
            <person name="Lord A."/>
            <person name="Arrowsmith C."/>
            <person name="Jagels K."/>
            <person name="Moule S."/>
            <person name="Mungall K."/>
            <person name="Saunders M."/>
            <person name="Whitehead S."/>
            <person name="Chabalgoity J.A."/>
            <person name="Maskell D."/>
            <person name="Humphreys T."/>
            <person name="Roberts M."/>
            <person name="Barrow P.A."/>
            <person name="Dougan G."/>
            <person name="Parkhill J."/>
        </authorList>
    </citation>
    <scope>NUCLEOTIDE SEQUENCE [LARGE SCALE GENOMIC DNA]</scope>
    <source>
        <strain>287/91 / NCTC 13346</strain>
    </source>
</reference>
<gene>
    <name evidence="1" type="primary">yeaL</name>
    <name type="ordered locus">SG1843</name>
</gene>
<accession>B5RB26</accession>
<feature type="chain" id="PRO_0000388925" description="UPF0756 membrane protein YeaL">
    <location>
        <begin position="1"/>
        <end position="148"/>
    </location>
</feature>
<feature type="transmembrane region" description="Helical" evidence="1">
    <location>
        <begin position="14"/>
        <end position="34"/>
    </location>
</feature>
<feature type="transmembrane region" description="Helical" evidence="1">
    <location>
        <begin position="51"/>
        <end position="71"/>
    </location>
</feature>
<feature type="transmembrane region" description="Helical" evidence="1">
    <location>
        <begin position="86"/>
        <end position="106"/>
    </location>
</feature>
<feature type="transmembrane region" description="Helical" evidence="1">
    <location>
        <begin position="121"/>
        <end position="141"/>
    </location>
</feature>
<keyword id="KW-1003">Cell membrane</keyword>
<keyword id="KW-0472">Membrane</keyword>
<keyword id="KW-0812">Transmembrane</keyword>
<keyword id="KW-1133">Transmembrane helix</keyword>
<organism>
    <name type="scientific">Salmonella gallinarum (strain 287/91 / NCTC 13346)</name>
    <dbReference type="NCBI Taxonomy" id="550538"/>
    <lineage>
        <taxon>Bacteria</taxon>
        <taxon>Pseudomonadati</taxon>
        <taxon>Pseudomonadota</taxon>
        <taxon>Gammaproteobacteria</taxon>
        <taxon>Enterobacterales</taxon>
        <taxon>Enterobacteriaceae</taxon>
        <taxon>Salmonella</taxon>
    </lineage>
</organism>
<sequence>MFDVTLLILLGLAALGFISHNTTVAVSILVLIIVRVTPLNTFFPWIEKQGLTVGIIILTIGVMAPIASGTLPPSTLIHSFVNWKSLVAIAVGVFVSWLGGRGITLMGNQPQLVAGLLVGTVLGVALFRGVPVGPLIAAGLVSLIVGKQ</sequence>
<protein>
    <recommendedName>
        <fullName evidence="1">UPF0756 membrane protein YeaL</fullName>
    </recommendedName>
</protein>
<dbReference type="EMBL" id="AM933173">
    <property type="protein sequence ID" value="CAR37696.1"/>
    <property type="molecule type" value="Genomic_DNA"/>
</dbReference>
<dbReference type="RefSeq" id="WP_000460698.1">
    <property type="nucleotide sequence ID" value="NC_011274.1"/>
</dbReference>
<dbReference type="KEGG" id="seg:SG1843"/>
<dbReference type="HOGENOM" id="CLU_125889_0_0_6"/>
<dbReference type="Proteomes" id="UP000008321">
    <property type="component" value="Chromosome"/>
</dbReference>
<dbReference type="GO" id="GO:0005886">
    <property type="term" value="C:plasma membrane"/>
    <property type="evidence" value="ECO:0007669"/>
    <property type="project" value="UniProtKB-SubCell"/>
</dbReference>
<dbReference type="HAMAP" id="MF_01874">
    <property type="entry name" value="UPF0756"/>
    <property type="match status" value="1"/>
</dbReference>
<dbReference type="InterPro" id="IPR007382">
    <property type="entry name" value="UPF0756_TM"/>
</dbReference>
<dbReference type="PANTHER" id="PTHR38452">
    <property type="entry name" value="UPF0756 MEMBRANE PROTEIN YEAL"/>
    <property type="match status" value="1"/>
</dbReference>
<dbReference type="PANTHER" id="PTHR38452:SF1">
    <property type="entry name" value="UPF0756 MEMBRANE PROTEIN YEAL"/>
    <property type="match status" value="1"/>
</dbReference>
<dbReference type="Pfam" id="PF04284">
    <property type="entry name" value="DUF441"/>
    <property type="match status" value="1"/>
</dbReference>
<name>YEAL_SALG2</name>